<keyword id="KW-0012">Acyltransferase</keyword>
<keyword id="KW-0963">Cytoplasm</keyword>
<keyword id="KW-0408">Iron</keyword>
<keyword id="KW-0479">Metal-binding</keyword>
<keyword id="KW-1185">Reference proteome</keyword>
<keyword id="KW-0808">Transferase</keyword>
<keyword id="KW-0819">tRNA processing</keyword>
<accession>P57166</accession>
<organism>
    <name type="scientific">Buchnera aphidicola subsp. Acyrthosiphon pisum (strain APS)</name>
    <name type="common">Acyrthosiphon pisum symbiotic bacterium</name>
    <dbReference type="NCBI Taxonomy" id="107806"/>
    <lineage>
        <taxon>Bacteria</taxon>
        <taxon>Pseudomonadati</taxon>
        <taxon>Pseudomonadota</taxon>
        <taxon>Gammaproteobacteria</taxon>
        <taxon>Enterobacterales</taxon>
        <taxon>Erwiniaceae</taxon>
        <taxon>Buchnera</taxon>
    </lineage>
</organism>
<evidence type="ECO:0000255" key="1">
    <source>
        <dbReference type="HAMAP-Rule" id="MF_01445"/>
    </source>
</evidence>
<feature type="chain" id="PRO_0000096959" description="tRNA N6-adenosine threonylcarbamoyltransferase">
    <location>
        <begin position="1"/>
        <end position="336"/>
    </location>
</feature>
<feature type="binding site" evidence="1">
    <location>
        <position position="110"/>
    </location>
    <ligand>
        <name>Fe cation</name>
        <dbReference type="ChEBI" id="CHEBI:24875"/>
    </ligand>
</feature>
<feature type="binding site" evidence="1">
    <location>
        <position position="114"/>
    </location>
    <ligand>
        <name>Fe cation</name>
        <dbReference type="ChEBI" id="CHEBI:24875"/>
    </ligand>
</feature>
<feature type="binding site" evidence="1">
    <location>
        <begin position="133"/>
        <end position="137"/>
    </location>
    <ligand>
        <name>substrate</name>
    </ligand>
</feature>
<feature type="binding site" evidence="1">
    <location>
        <position position="166"/>
    </location>
    <ligand>
        <name>substrate</name>
    </ligand>
</feature>
<feature type="binding site" evidence="1">
    <location>
        <position position="179"/>
    </location>
    <ligand>
        <name>substrate</name>
    </ligand>
</feature>
<feature type="binding site" evidence="1">
    <location>
        <position position="271"/>
    </location>
    <ligand>
        <name>substrate</name>
    </ligand>
</feature>
<feature type="binding site" evidence="1">
    <location>
        <position position="300"/>
    </location>
    <ligand>
        <name>Fe cation</name>
        <dbReference type="ChEBI" id="CHEBI:24875"/>
    </ligand>
</feature>
<comment type="function">
    <text evidence="1">Required for the formation of a threonylcarbamoyl group on adenosine at position 37 (t(6)A37) in tRNAs that read codons beginning with adenine. Is involved in the transfer of the threonylcarbamoyl moiety of threonylcarbamoyl-AMP (TC-AMP) to the N6 group of A37, together with TsaE and TsaB. TsaD likely plays a direct catalytic role in this reaction.</text>
</comment>
<comment type="catalytic activity">
    <reaction evidence="1">
        <text>L-threonylcarbamoyladenylate + adenosine(37) in tRNA = N(6)-L-threonylcarbamoyladenosine(37) in tRNA + AMP + H(+)</text>
        <dbReference type="Rhea" id="RHEA:37059"/>
        <dbReference type="Rhea" id="RHEA-COMP:10162"/>
        <dbReference type="Rhea" id="RHEA-COMP:10163"/>
        <dbReference type="ChEBI" id="CHEBI:15378"/>
        <dbReference type="ChEBI" id="CHEBI:73682"/>
        <dbReference type="ChEBI" id="CHEBI:74411"/>
        <dbReference type="ChEBI" id="CHEBI:74418"/>
        <dbReference type="ChEBI" id="CHEBI:456215"/>
        <dbReference type="EC" id="2.3.1.234"/>
    </reaction>
</comment>
<comment type="cofactor">
    <cofactor evidence="1">
        <name>Fe(2+)</name>
        <dbReference type="ChEBI" id="CHEBI:29033"/>
    </cofactor>
    <text evidence="1">Binds 1 Fe(2+) ion per subunit.</text>
</comment>
<comment type="subcellular location">
    <subcellularLocation>
        <location evidence="1">Cytoplasm</location>
    </subcellularLocation>
</comment>
<comment type="similarity">
    <text evidence="1">Belongs to the KAE1 / TsaD family.</text>
</comment>
<reference key="1">
    <citation type="journal article" date="2000" name="Nature">
        <title>Genome sequence of the endocellular bacterial symbiont of aphids Buchnera sp. APS.</title>
        <authorList>
            <person name="Shigenobu S."/>
            <person name="Watanabe H."/>
            <person name="Hattori M."/>
            <person name="Sakaki Y."/>
            <person name="Ishikawa H."/>
        </authorList>
    </citation>
    <scope>NUCLEOTIDE SEQUENCE [LARGE SCALE GENOMIC DNA]</scope>
    <source>
        <strain>APS</strain>
    </source>
</reference>
<name>TSAD_BUCAI</name>
<gene>
    <name evidence="1" type="primary">tsaD</name>
    <name type="synonym">gcp</name>
    <name type="ordered locus">BU058</name>
</gene>
<sequence length="336" mass="37438">MRILGIETSCDDTGIAIYDTNKGLLINEIYNQRKLNNIYGGIIPELASREHMEAMIVLLNKIFKKKNIYKYVDMIAYTAGPGLIGSLLVGATFACSLGLSLNIPVLPVHHMEAHLLSPMLDYKTIQFPFIGLLVSGKHTQIIGAHKFGEYEILGNCLDDAAGEAFDKTAKLLGLKYPGGLELSKLASKGIKDYFYFPRPMIHHSDLNFSFSGLKTFAAQTIKKSSKSMQEKANIAKAFEDAVIDILLIKTKKALKKQKWKRLVIAGGVSANQKLRKKSEIMVKKNFNGTVFYSSLEFCTDNAAMIAYLGSLRQKEARNSQLEILVKPKWSIDDLCF</sequence>
<proteinExistence type="inferred from homology"/>
<dbReference type="EC" id="2.3.1.234" evidence="1"/>
<dbReference type="EMBL" id="BA000003">
    <property type="protein sequence ID" value="BAB12781.1"/>
    <property type="molecule type" value="Genomic_DNA"/>
</dbReference>
<dbReference type="RefSeq" id="NP_239895.1">
    <property type="nucleotide sequence ID" value="NC_002528.1"/>
</dbReference>
<dbReference type="RefSeq" id="WP_009874015.1">
    <property type="nucleotide sequence ID" value="NZ_AP036055.1"/>
</dbReference>
<dbReference type="SMR" id="P57166"/>
<dbReference type="STRING" id="563178.BUAP5A_057"/>
<dbReference type="EnsemblBacteria" id="BAB12781">
    <property type="protein sequence ID" value="BAB12781"/>
    <property type="gene ID" value="BAB12781"/>
</dbReference>
<dbReference type="KEGG" id="buc:BU058"/>
<dbReference type="PATRIC" id="fig|107806.10.peg.67"/>
<dbReference type="eggNOG" id="COG0533">
    <property type="taxonomic scope" value="Bacteria"/>
</dbReference>
<dbReference type="HOGENOM" id="CLU_023208_0_2_6"/>
<dbReference type="Proteomes" id="UP000001806">
    <property type="component" value="Chromosome"/>
</dbReference>
<dbReference type="GO" id="GO:0005737">
    <property type="term" value="C:cytoplasm"/>
    <property type="evidence" value="ECO:0007669"/>
    <property type="project" value="UniProtKB-SubCell"/>
</dbReference>
<dbReference type="GO" id="GO:0005506">
    <property type="term" value="F:iron ion binding"/>
    <property type="evidence" value="ECO:0007669"/>
    <property type="project" value="UniProtKB-UniRule"/>
</dbReference>
<dbReference type="GO" id="GO:0061711">
    <property type="term" value="F:N(6)-L-threonylcarbamoyladenine synthase activity"/>
    <property type="evidence" value="ECO:0007669"/>
    <property type="project" value="UniProtKB-EC"/>
</dbReference>
<dbReference type="GO" id="GO:0002949">
    <property type="term" value="P:tRNA threonylcarbamoyladenosine modification"/>
    <property type="evidence" value="ECO:0007669"/>
    <property type="project" value="UniProtKB-UniRule"/>
</dbReference>
<dbReference type="FunFam" id="3.30.420.40:FF:000012">
    <property type="entry name" value="tRNA N6-adenosine threonylcarbamoyltransferase"/>
    <property type="match status" value="1"/>
</dbReference>
<dbReference type="Gene3D" id="3.30.420.40">
    <property type="match status" value="2"/>
</dbReference>
<dbReference type="HAMAP" id="MF_01445">
    <property type="entry name" value="TsaD"/>
    <property type="match status" value="1"/>
</dbReference>
<dbReference type="InterPro" id="IPR043129">
    <property type="entry name" value="ATPase_NBD"/>
</dbReference>
<dbReference type="InterPro" id="IPR000905">
    <property type="entry name" value="Gcp-like_dom"/>
</dbReference>
<dbReference type="InterPro" id="IPR017861">
    <property type="entry name" value="KAE1/TsaD"/>
</dbReference>
<dbReference type="InterPro" id="IPR017860">
    <property type="entry name" value="Peptidase_M22_CS"/>
</dbReference>
<dbReference type="InterPro" id="IPR022450">
    <property type="entry name" value="TsaD"/>
</dbReference>
<dbReference type="NCBIfam" id="TIGR00329">
    <property type="entry name" value="gcp_kae1"/>
    <property type="match status" value="1"/>
</dbReference>
<dbReference type="NCBIfam" id="TIGR03723">
    <property type="entry name" value="T6A_TsaD_YgjD"/>
    <property type="match status" value="1"/>
</dbReference>
<dbReference type="PANTHER" id="PTHR11735">
    <property type="entry name" value="TRNA N6-ADENOSINE THREONYLCARBAMOYLTRANSFERASE"/>
    <property type="match status" value="1"/>
</dbReference>
<dbReference type="PANTHER" id="PTHR11735:SF6">
    <property type="entry name" value="TRNA N6-ADENOSINE THREONYLCARBAMOYLTRANSFERASE, MITOCHONDRIAL"/>
    <property type="match status" value="1"/>
</dbReference>
<dbReference type="Pfam" id="PF00814">
    <property type="entry name" value="TsaD"/>
    <property type="match status" value="1"/>
</dbReference>
<dbReference type="PRINTS" id="PR00789">
    <property type="entry name" value="OSIALOPTASE"/>
</dbReference>
<dbReference type="SUPFAM" id="SSF53067">
    <property type="entry name" value="Actin-like ATPase domain"/>
    <property type="match status" value="2"/>
</dbReference>
<dbReference type="PROSITE" id="PS01016">
    <property type="entry name" value="GLYCOPROTEASE"/>
    <property type="match status" value="1"/>
</dbReference>
<protein>
    <recommendedName>
        <fullName evidence="1">tRNA N6-adenosine threonylcarbamoyltransferase</fullName>
        <ecNumber evidence="1">2.3.1.234</ecNumber>
    </recommendedName>
    <alternativeName>
        <fullName evidence="1">N6-L-threonylcarbamoyladenine synthase</fullName>
        <shortName evidence="1">t(6)A synthase</shortName>
    </alternativeName>
    <alternativeName>
        <fullName evidence="1">t(6)A37 threonylcarbamoyladenosine biosynthesis protein TsaD</fullName>
    </alternativeName>
    <alternativeName>
        <fullName evidence="1">tRNA threonylcarbamoyladenosine biosynthesis protein TsaD</fullName>
    </alternativeName>
</protein>